<dbReference type="EMBL" id="CP000924">
    <property type="protein sequence ID" value="ABY94846.1"/>
    <property type="molecule type" value="Genomic_DNA"/>
</dbReference>
<dbReference type="RefSeq" id="WP_003869118.1">
    <property type="nucleotide sequence ID" value="NC_010321.1"/>
</dbReference>
<dbReference type="SMR" id="B0K9N3"/>
<dbReference type="STRING" id="340099.Teth39_1192"/>
<dbReference type="KEGG" id="tpd:Teth39_1192"/>
<dbReference type="eggNOG" id="COG1058">
    <property type="taxonomic scope" value="Bacteria"/>
</dbReference>
<dbReference type="eggNOG" id="COG1546">
    <property type="taxonomic scope" value="Bacteria"/>
</dbReference>
<dbReference type="HOGENOM" id="CLU_030805_9_3_9"/>
<dbReference type="Proteomes" id="UP000002156">
    <property type="component" value="Chromosome"/>
</dbReference>
<dbReference type="CDD" id="cd00885">
    <property type="entry name" value="cinA"/>
    <property type="match status" value="1"/>
</dbReference>
<dbReference type="Gene3D" id="3.30.70.2860">
    <property type="match status" value="1"/>
</dbReference>
<dbReference type="Gene3D" id="3.90.950.20">
    <property type="entry name" value="CinA-like"/>
    <property type="match status" value="1"/>
</dbReference>
<dbReference type="Gene3D" id="3.40.980.10">
    <property type="entry name" value="MoaB/Mog-like domain"/>
    <property type="match status" value="1"/>
</dbReference>
<dbReference type="HAMAP" id="MF_00226_B">
    <property type="entry name" value="CinA_B"/>
    <property type="match status" value="1"/>
</dbReference>
<dbReference type="InterPro" id="IPR050101">
    <property type="entry name" value="CinA"/>
</dbReference>
<dbReference type="InterPro" id="IPR036653">
    <property type="entry name" value="CinA-like_C"/>
</dbReference>
<dbReference type="InterPro" id="IPR008136">
    <property type="entry name" value="CinA_C"/>
</dbReference>
<dbReference type="InterPro" id="IPR041424">
    <property type="entry name" value="CinA_KH"/>
</dbReference>
<dbReference type="InterPro" id="IPR008135">
    <property type="entry name" value="Competence-induced_CinA"/>
</dbReference>
<dbReference type="InterPro" id="IPR036425">
    <property type="entry name" value="MoaB/Mog-like_dom_sf"/>
</dbReference>
<dbReference type="InterPro" id="IPR001453">
    <property type="entry name" value="MoaB/Mog_dom"/>
</dbReference>
<dbReference type="NCBIfam" id="TIGR00200">
    <property type="entry name" value="cinA_nterm"/>
    <property type="match status" value="1"/>
</dbReference>
<dbReference type="NCBIfam" id="TIGR00177">
    <property type="entry name" value="molyb_syn"/>
    <property type="match status" value="1"/>
</dbReference>
<dbReference type="NCBIfam" id="TIGR00199">
    <property type="entry name" value="PncC_domain"/>
    <property type="match status" value="1"/>
</dbReference>
<dbReference type="NCBIfam" id="NF001813">
    <property type="entry name" value="PRK00549.1"/>
    <property type="match status" value="1"/>
</dbReference>
<dbReference type="PANTHER" id="PTHR13939">
    <property type="entry name" value="NICOTINAMIDE-NUCLEOTIDE AMIDOHYDROLASE PNCC"/>
    <property type="match status" value="1"/>
</dbReference>
<dbReference type="PANTHER" id="PTHR13939:SF0">
    <property type="entry name" value="NMN AMIDOHYDROLASE-LIKE PROTEIN YFAY"/>
    <property type="match status" value="1"/>
</dbReference>
<dbReference type="Pfam" id="PF02464">
    <property type="entry name" value="CinA"/>
    <property type="match status" value="1"/>
</dbReference>
<dbReference type="Pfam" id="PF18146">
    <property type="entry name" value="CinA_KH"/>
    <property type="match status" value="1"/>
</dbReference>
<dbReference type="Pfam" id="PF00994">
    <property type="entry name" value="MoCF_biosynth"/>
    <property type="match status" value="1"/>
</dbReference>
<dbReference type="PIRSF" id="PIRSF006728">
    <property type="entry name" value="CinA"/>
    <property type="match status" value="1"/>
</dbReference>
<dbReference type="SMART" id="SM00852">
    <property type="entry name" value="MoCF_biosynth"/>
    <property type="match status" value="1"/>
</dbReference>
<dbReference type="SUPFAM" id="SSF142433">
    <property type="entry name" value="CinA-like"/>
    <property type="match status" value="1"/>
</dbReference>
<dbReference type="SUPFAM" id="SSF53218">
    <property type="entry name" value="Molybdenum cofactor biosynthesis proteins"/>
    <property type="match status" value="1"/>
</dbReference>
<sequence length="413" mass="45360">MRGEIISVGTELLLGQILNTNAKYLSEKLALLGIDIYFHTNVGDNEERLKECLNIAFNRSDLIITTGGLGPTVDDITKETVASFLGLPLVENIEAKEEIIRFFEKIGQTPTMNNFKQAFFPEGAKILPNKNGTAPGCIIEKDNKIIIILPGPPSELIPMFEESVYPYLKSKTNETIKSRVIKIFGLGESKVEEMVKPLLFNSNPTVAPLVGDGYVTLRITAKGHDDKEILEMIEDMESRIRGIIGDYIYAVDEEEMEEVVIKLLQKNKLTLAVSESCTGGLLAKKITDVSGASKVFNLGVVSYSNEAKENILGVRKSTLESYGAVSHETAKEMAENIRKLANADFGLSTTGIAGPTGGTPEKPVGLVYVGFATNEKVYVKKLMLSGDRSKIRTRTVLHALDIVRRYLLGIKID</sequence>
<gene>
    <name evidence="1" type="primary">cinA</name>
    <name type="ordered locus">Teth39_1192</name>
</gene>
<comment type="similarity">
    <text evidence="1">Belongs to the CinA family.</text>
</comment>
<protein>
    <recommendedName>
        <fullName evidence="1">Putative competence-damage inducible protein</fullName>
    </recommendedName>
</protein>
<reference key="1">
    <citation type="submission" date="2008-01" db="EMBL/GenBank/DDBJ databases">
        <title>Complete sequence of Thermoanaerobacter pseudethanolicus 39E.</title>
        <authorList>
            <person name="Copeland A."/>
            <person name="Lucas S."/>
            <person name="Lapidus A."/>
            <person name="Barry K."/>
            <person name="Glavina del Rio T."/>
            <person name="Dalin E."/>
            <person name="Tice H."/>
            <person name="Pitluck S."/>
            <person name="Bruce D."/>
            <person name="Goodwin L."/>
            <person name="Saunders E."/>
            <person name="Brettin T."/>
            <person name="Detter J.C."/>
            <person name="Han C."/>
            <person name="Schmutz J."/>
            <person name="Larimer F."/>
            <person name="Land M."/>
            <person name="Hauser L."/>
            <person name="Kyrpides N."/>
            <person name="Lykidis A."/>
            <person name="Hemme C."/>
            <person name="Fields M.W."/>
            <person name="He Z."/>
            <person name="Zhou J."/>
            <person name="Richardson P."/>
        </authorList>
    </citation>
    <scope>NUCLEOTIDE SEQUENCE [LARGE SCALE GENOMIC DNA]</scope>
    <source>
        <strain>ATCC 33223 / DSM 2355 / 39E</strain>
    </source>
</reference>
<evidence type="ECO:0000255" key="1">
    <source>
        <dbReference type="HAMAP-Rule" id="MF_00226"/>
    </source>
</evidence>
<proteinExistence type="inferred from homology"/>
<feature type="chain" id="PRO_1000100341" description="Putative competence-damage inducible protein">
    <location>
        <begin position="1"/>
        <end position="413"/>
    </location>
</feature>
<name>CINA_THEP3</name>
<organism>
    <name type="scientific">Thermoanaerobacter pseudethanolicus (strain ATCC 33223 / 39E)</name>
    <name type="common">Clostridium thermohydrosulfuricum</name>
    <dbReference type="NCBI Taxonomy" id="340099"/>
    <lineage>
        <taxon>Bacteria</taxon>
        <taxon>Bacillati</taxon>
        <taxon>Bacillota</taxon>
        <taxon>Clostridia</taxon>
        <taxon>Thermoanaerobacterales</taxon>
        <taxon>Thermoanaerobacteraceae</taxon>
        <taxon>Thermoanaerobacter</taxon>
    </lineage>
</organism>
<accession>B0K9N3</accession>
<keyword id="KW-1185">Reference proteome</keyword>